<organism>
    <name type="scientific">Escherichia coli O45:K1 (strain S88 / ExPEC)</name>
    <dbReference type="NCBI Taxonomy" id="585035"/>
    <lineage>
        <taxon>Bacteria</taxon>
        <taxon>Pseudomonadati</taxon>
        <taxon>Pseudomonadota</taxon>
        <taxon>Gammaproteobacteria</taxon>
        <taxon>Enterobacterales</taxon>
        <taxon>Enterobacteriaceae</taxon>
        <taxon>Escherichia</taxon>
    </lineage>
</organism>
<comment type="function">
    <text evidence="1">Specifically methylates guanosine-37 in various tRNAs.</text>
</comment>
<comment type="catalytic activity">
    <reaction evidence="1">
        <text>guanosine(37) in tRNA + S-adenosyl-L-methionine = N(1)-methylguanosine(37) in tRNA + S-adenosyl-L-homocysteine + H(+)</text>
        <dbReference type="Rhea" id="RHEA:36899"/>
        <dbReference type="Rhea" id="RHEA-COMP:10145"/>
        <dbReference type="Rhea" id="RHEA-COMP:10147"/>
        <dbReference type="ChEBI" id="CHEBI:15378"/>
        <dbReference type="ChEBI" id="CHEBI:57856"/>
        <dbReference type="ChEBI" id="CHEBI:59789"/>
        <dbReference type="ChEBI" id="CHEBI:73542"/>
        <dbReference type="ChEBI" id="CHEBI:74269"/>
        <dbReference type="EC" id="2.1.1.228"/>
    </reaction>
</comment>
<comment type="subunit">
    <text evidence="1">Homodimer.</text>
</comment>
<comment type="subcellular location">
    <subcellularLocation>
        <location evidence="1">Cytoplasm</location>
    </subcellularLocation>
</comment>
<comment type="similarity">
    <text evidence="1">Belongs to the RNA methyltransferase TrmD family.</text>
</comment>
<sequence length="255" mass="28422">MWIGIISLFPEMFRAITDYGVTGRAVKNGLLSIQSWSPRDFTHDRHRTVDDRPYGGGPGMLMMVQPLRDAIHAAKAAAGEGAKVIYLSPQGRKLDQAGVSELATNQKLILVCGRYEGIDERVIQTEIDEEWSIGDYVLSGGELPAMTLIDSVSRFIPGVLGHEASATEDSFAEGLLDCPHYTRPEVLEGMEVPPVLLSGNHAEIRRWRLKQSLGRTWLRRPELLENLALTEEQARLLAEFKTEHAQQQHKHDGMA</sequence>
<reference key="1">
    <citation type="journal article" date="2009" name="PLoS Genet.">
        <title>Organised genome dynamics in the Escherichia coli species results in highly diverse adaptive paths.</title>
        <authorList>
            <person name="Touchon M."/>
            <person name="Hoede C."/>
            <person name="Tenaillon O."/>
            <person name="Barbe V."/>
            <person name="Baeriswyl S."/>
            <person name="Bidet P."/>
            <person name="Bingen E."/>
            <person name="Bonacorsi S."/>
            <person name="Bouchier C."/>
            <person name="Bouvet O."/>
            <person name="Calteau A."/>
            <person name="Chiapello H."/>
            <person name="Clermont O."/>
            <person name="Cruveiller S."/>
            <person name="Danchin A."/>
            <person name="Diard M."/>
            <person name="Dossat C."/>
            <person name="Karoui M.E."/>
            <person name="Frapy E."/>
            <person name="Garry L."/>
            <person name="Ghigo J.M."/>
            <person name="Gilles A.M."/>
            <person name="Johnson J."/>
            <person name="Le Bouguenec C."/>
            <person name="Lescat M."/>
            <person name="Mangenot S."/>
            <person name="Martinez-Jehanne V."/>
            <person name="Matic I."/>
            <person name="Nassif X."/>
            <person name="Oztas S."/>
            <person name="Petit M.A."/>
            <person name="Pichon C."/>
            <person name="Rouy Z."/>
            <person name="Ruf C.S."/>
            <person name="Schneider D."/>
            <person name="Tourret J."/>
            <person name="Vacherie B."/>
            <person name="Vallenet D."/>
            <person name="Medigue C."/>
            <person name="Rocha E.P.C."/>
            <person name="Denamur E."/>
        </authorList>
    </citation>
    <scope>NUCLEOTIDE SEQUENCE [LARGE SCALE GENOMIC DNA]</scope>
    <source>
        <strain>S88 / ExPEC</strain>
    </source>
</reference>
<dbReference type="EC" id="2.1.1.228" evidence="1"/>
<dbReference type="EMBL" id="CU928161">
    <property type="protein sequence ID" value="CAR04047.1"/>
    <property type="molecule type" value="Genomic_DNA"/>
</dbReference>
<dbReference type="RefSeq" id="WP_000264777.1">
    <property type="nucleotide sequence ID" value="NC_011742.1"/>
</dbReference>
<dbReference type="SMR" id="B7MIU5"/>
<dbReference type="GeneID" id="93774457"/>
<dbReference type="KEGG" id="ecz:ECS88_2793"/>
<dbReference type="HOGENOM" id="CLU_047363_0_1_6"/>
<dbReference type="Proteomes" id="UP000000747">
    <property type="component" value="Chromosome"/>
</dbReference>
<dbReference type="GO" id="GO:0005829">
    <property type="term" value="C:cytosol"/>
    <property type="evidence" value="ECO:0007669"/>
    <property type="project" value="TreeGrafter"/>
</dbReference>
<dbReference type="GO" id="GO:0052906">
    <property type="term" value="F:tRNA (guanine(37)-N1)-methyltransferase activity"/>
    <property type="evidence" value="ECO:0007669"/>
    <property type="project" value="UniProtKB-UniRule"/>
</dbReference>
<dbReference type="GO" id="GO:0002939">
    <property type="term" value="P:tRNA N1-guanine methylation"/>
    <property type="evidence" value="ECO:0007669"/>
    <property type="project" value="TreeGrafter"/>
</dbReference>
<dbReference type="CDD" id="cd18080">
    <property type="entry name" value="TrmD-like"/>
    <property type="match status" value="1"/>
</dbReference>
<dbReference type="FunFam" id="1.10.1270.20:FF:000001">
    <property type="entry name" value="tRNA (guanine-N(1)-)-methyltransferase"/>
    <property type="match status" value="1"/>
</dbReference>
<dbReference type="FunFam" id="3.40.1280.10:FF:000001">
    <property type="entry name" value="tRNA (guanine-N(1)-)-methyltransferase"/>
    <property type="match status" value="1"/>
</dbReference>
<dbReference type="Gene3D" id="3.40.1280.10">
    <property type="match status" value="1"/>
</dbReference>
<dbReference type="Gene3D" id="1.10.1270.20">
    <property type="entry name" value="tRNA(m1g37)methyltransferase, domain 2"/>
    <property type="match status" value="1"/>
</dbReference>
<dbReference type="HAMAP" id="MF_00605">
    <property type="entry name" value="TrmD"/>
    <property type="match status" value="1"/>
</dbReference>
<dbReference type="InterPro" id="IPR029028">
    <property type="entry name" value="Alpha/beta_knot_MTases"/>
</dbReference>
<dbReference type="InterPro" id="IPR023148">
    <property type="entry name" value="tRNA_m1G_MeTrfase_C_sf"/>
</dbReference>
<dbReference type="InterPro" id="IPR002649">
    <property type="entry name" value="tRNA_m1G_MeTrfase_TrmD"/>
</dbReference>
<dbReference type="InterPro" id="IPR029026">
    <property type="entry name" value="tRNA_m1G_MTases_N"/>
</dbReference>
<dbReference type="InterPro" id="IPR016009">
    <property type="entry name" value="tRNA_MeTrfase_TRMD/TRM10"/>
</dbReference>
<dbReference type="NCBIfam" id="NF000648">
    <property type="entry name" value="PRK00026.1"/>
    <property type="match status" value="1"/>
</dbReference>
<dbReference type="NCBIfam" id="TIGR00088">
    <property type="entry name" value="trmD"/>
    <property type="match status" value="1"/>
</dbReference>
<dbReference type="PANTHER" id="PTHR46417">
    <property type="entry name" value="TRNA (GUANINE-N(1)-)-METHYLTRANSFERASE"/>
    <property type="match status" value="1"/>
</dbReference>
<dbReference type="PANTHER" id="PTHR46417:SF1">
    <property type="entry name" value="TRNA (GUANINE-N(1)-)-METHYLTRANSFERASE"/>
    <property type="match status" value="1"/>
</dbReference>
<dbReference type="Pfam" id="PF01746">
    <property type="entry name" value="tRNA_m1G_MT"/>
    <property type="match status" value="1"/>
</dbReference>
<dbReference type="PIRSF" id="PIRSF000386">
    <property type="entry name" value="tRNA_mtase"/>
    <property type="match status" value="1"/>
</dbReference>
<dbReference type="SUPFAM" id="SSF75217">
    <property type="entry name" value="alpha/beta knot"/>
    <property type="match status" value="1"/>
</dbReference>
<protein>
    <recommendedName>
        <fullName evidence="1">tRNA (guanine-N(1)-)-methyltransferase</fullName>
        <ecNumber evidence="1">2.1.1.228</ecNumber>
    </recommendedName>
    <alternativeName>
        <fullName evidence="1">M1G-methyltransferase</fullName>
    </alternativeName>
    <alternativeName>
        <fullName evidence="1">tRNA [GM37] methyltransferase</fullName>
    </alternativeName>
</protein>
<keyword id="KW-0963">Cytoplasm</keyword>
<keyword id="KW-0489">Methyltransferase</keyword>
<keyword id="KW-1185">Reference proteome</keyword>
<keyword id="KW-0949">S-adenosyl-L-methionine</keyword>
<keyword id="KW-0808">Transferase</keyword>
<keyword id="KW-0819">tRNA processing</keyword>
<evidence type="ECO:0000255" key="1">
    <source>
        <dbReference type="HAMAP-Rule" id="MF_00605"/>
    </source>
</evidence>
<gene>
    <name evidence="1" type="primary">trmD</name>
    <name type="ordered locus">ECS88_2793</name>
</gene>
<feature type="chain" id="PRO_1000130163" description="tRNA (guanine-N(1)-)-methyltransferase">
    <location>
        <begin position="1"/>
        <end position="255"/>
    </location>
</feature>
<feature type="binding site" evidence="1">
    <location>
        <position position="113"/>
    </location>
    <ligand>
        <name>S-adenosyl-L-methionine</name>
        <dbReference type="ChEBI" id="CHEBI:59789"/>
    </ligand>
</feature>
<feature type="binding site" evidence="1">
    <location>
        <begin position="133"/>
        <end position="138"/>
    </location>
    <ligand>
        <name>S-adenosyl-L-methionine</name>
        <dbReference type="ChEBI" id="CHEBI:59789"/>
    </ligand>
</feature>
<proteinExistence type="inferred from homology"/>
<name>TRMD_ECO45</name>
<accession>B7MIU5</accession>